<accession>A4VKF4</accession>
<protein>
    <recommendedName>
        <fullName evidence="1">N-(5'-phosphoribosyl)anthranilate isomerase</fullName>
        <shortName evidence="1">PRAI</shortName>
        <ecNumber evidence="1">5.3.1.24</ecNumber>
    </recommendedName>
</protein>
<feature type="chain" id="PRO_1000018627" description="N-(5'-phosphoribosyl)anthranilate isomerase">
    <location>
        <begin position="1"/>
        <end position="207"/>
    </location>
</feature>
<proteinExistence type="inferred from homology"/>
<gene>
    <name evidence="1" type="primary">trpF</name>
    <name type="ordered locus">PST_1779</name>
</gene>
<sequence length="207" mass="21891">MPVVRSKICGITRVEDALIAAKAGADAIGLVFYGKSPRAVSLQRAREIVAALPPFVTTVGLFVNASRCEINEILDAVPLDMLQFHGDESPAQCEGFHRPWYKALRVGGGEDIAAQVALYANASGVLLDTFVAGVPGGTGECFDWSLIPPNLSKPLILAGGLTADNVEQAIAQVRPYAVDISGGVEASKGIKDAVKVETFVRRVRSVM</sequence>
<name>TRPF_STUS1</name>
<comment type="catalytic activity">
    <reaction evidence="1">
        <text>N-(5-phospho-beta-D-ribosyl)anthranilate = 1-(2-carboxyphenylamino)-1-deoxy-D-ribulose 5-phosphate</text>
        <dbReference type="Rhea" id="RHEA:21540"/>
        <dbReference type="ChEBI" id="CHEBI:18277"/>
        <dbReference type="ChEBI" id="CHEBI:58613"/>
        <dbReference type="EC" id="5.3.1.24"/>
    </reaction>
</comment>
<comment type="pathway">
    <text evidence="1">Amino-acid biosynthesis; L-tryptophan biosynthesis; L-tryptophan from chorismate: step 3/5.</text>
</comment>
<comment type="similarity">
    <text evidence="1">Belongs to the TrpF family.</text>
</comment>
<organism>
    <name type="scientific">Stutzerimonas stutzeri (strain A1501)</name>
    <name type="common">Pseudomonas stutzeri</name>
    <dbReference type="NCBI Taxonomy" id="379731"/>
    <lineage>
        <taxon>Bacteria</taxon>
        <taxon>Pseudomonadati</taxon>
        <taxon>Pseudomonadota</taxon>
        <taxon>Gammaproteobacteria</taxon>
        <taxon>Pseudomonadales</taxon>
        <taxon>Pseudomonadaceae</taxon>
        <taxon>Stutzerimonas</taxon>
    </lineage>
</organism>
<dbReference type="EC" id="5.3.1.24" evidence="1"/>
<dbReference type="EMBL" id="CP000304">
    <property type="protein sequence ID" value="ABP79455.1"/>
    <property type="molecule type" value="Genomic_DNA"/>
</dbReference>
<dbReference type="RefSeq" id="WP_011912932.1">
    <property type="nucleotide sequence ID" value="NC_009434.1"/>
</dbReference>
<dbReference type="SMR" id="A4VKF4"/>
<dbReference type="KEGG" id="psa:PST_1779"/>
<dbReference type="eggNOG" id="COG0135">
    <property type="taxonomic scope" value="Bacteria"/>
</dbReference>
<dbReference type="HOGENOM" id="CLU_076364_2_0_6"/>
<dbReference type="UniPathway" id="UPA00035">
    <property type="reaction ID" value="UER00042"/>
</dbReference>
<dbReference type="Proteomes" id="UP000000233">
    <property type="component" value="Chromosome"/>
</dbReference>
<dbReference type="GO" id="GO:0004640">
    <property type="term" value="F:phosphoribosylanthranilate isomerase activity"/>
    <property type="evidence" value="ECO:0007669"/>
    <property type="project" value="UniProtKB-UniRule"/>
</dbReference>
<dbReference type="GO" id="GO:0000162">
    <property type="term" value="P:L-tryptophan biosynthetic process"/>
    <property type="evidence" value="ECO:0007669"/>
    <property type="project" value="UniProtKB-UniRule"/>
</dbReference>
<dbReference type="CDD" id="cd00405">
    <property type="entry name" value="PRAI"/>
    <property type="match status" value="1"/>
</dbReference>
<dbReference type="FunFam" id="3.20.20.70:FF:000075">
    <property type="entry name" value="Tryptophan biosynthesis protein TRP1"/>
    <property type="match status" value="1"/>
</dbReference>
<dbReference type="Gene3D" id="3.20.20.70">
    <property type="entry name" value="Aldolase class I"/>
    <property type="match status" value="1"/>
</dbReference>
<dbReference type="HAMAP" id="MF_00135">
    <property type="entry name" value="PRAI"/>
    <property type="match status" value="1"/>
</dbReference>
<dbReference type="InterPro" id="IPR013785">
    <property type="entry name" value="Aldolase_TIM"/>
</dbReference>
<dbReference type="InterPro" id="IPR001240">
    <property type="entry name" value="PRAI_dom"/>
</dbReference>
<dbReference type="InterPro" id="IPR011060">
    <property type="entry name" value="RibuloseP-bd_barrel"/>
</dbReference>
<dbReference type="InterPro" id="IPR044643">
    <property type="entry name" value="TrpF_fam"/>
</dbReference>
<dbReference type="NCBIfam" id="NF002298">
    <property type="entry name" value="PRK01222.1-4"/>
    <property type="match status" value="1"/>
</dbReference>
<dbReference type="NCBIfam" id="NF002299">
    <property type="entry name" value="PRK01222.1-6"/>
    <property type="match status" value="1"/>
</dbReference>
<dbReference type="PANTHER" id="PTHR42894">
    <property type="entry name" value="N-(5'-PHOSPHORIBOSYL)ANTHRANILATE ISOMERASE"/>
    <property type="match status" value="1"/>
</dbReference>
<dbReference type="PANTHER" id="PTHR42894:SF1">
    <property type="entry name" value="N-(5'-PHOSPHORIBOSYL)ANTHRANILATE ISOMERASE"/>
    <property type="match status" value="1"/>
</dbReference>
<dbReference type="Pfam" id="PF00697">
    <property type="entry name" value="PRAI"/>
    <property type="match status" value="1"/>
</dbReference>
<dbReference type="SUPFAM" id="SSF51366">
    <property type="entry name" value="Ribulose-phoshate binding barrel"/>
    <property type="match status" value="1"/>
</dbReference>
<evidence type="ECO:0000255" key="1">
    <source>
        <dbReference type="HAMAP-Rule" id="MF_00135"/>
    </source>
</evidence>
<keyword id="KW-0028">Amino-acid biosynthesis</keyword>
<keyword id="KW-0057">Aromatic amino acid biosynthesis</keyword>
<keyword id="KW-0413">Isomerase</keyword>
<keyword id="KW-1185">Reference proteome</keyword>
<keyword id="KW-0822">Tryptophan biosynthesis</keyword>
<reference key="1">
    <citation type="journal article" date="2008" name="Proc. Natl. Acad. Sci. U.S.A.">
        <title>Nitrogen fixation island and rhizosphere competence traits in the genome of root-associated Pseudomonas stutzeri A1501.</title>
        <authorList>
            <person name="Yan Y."/>
            <person name="Yang J."/>
            <person name="Dou Y."/>
            <person name="Chen M."/>
            <person name="Ping S."/>
            <person name="Peng J."/>
            <person name="Lu W."/>
            <person name="Zhang W."/>
            <person name="Yao Z."/>
            <person name="Li H."/>
            <person name="Liu W."/>
            <person name="He S."/>
            <person name="Geng L."/>
            <person name="Zhang X."/>
            <person name="Yang F."/>
            <person name="Yu H."/>
            <person name="Zhan Y."/>
            <person name="Li D."/>
            <person name="Lin Z."/>
            <person name="Wang Y."/>
            <person name="Elmerich C."/>
            <person name="Lin M."/>
            <person name="Jin Q."/>
        </authorList>
    </citation>
    <scope>NUCLEOTIDE SEQUENCE [LARGE SCALE GENOMIC DNA]</scope>
    <source>
        <strain>A1501</strain>
    </source>
</reference>